<dbReference type="EC" id="2.7.2.1" evidence="1"/>
<dbReference type="EMBL" id="BA000022">
    <property type="protein sequence ID" value="BAA17188.1"/>
    <property type="molecule type" value="Genomic_DNA"/>
</dbReference>
<dbReference type="PIR" id="S75274">
    <property type="entry name" value="S75274"/>
</dbReference>
<dbReference type="SMR" id="P73162"/>
<dbReference type="FunCoup" id="P73162">
    <property type="interactions" value="353"/>
</dbReference>
<dbReference type="IntAct" id="P73162">
    <property type="interactions" value="1"/>
</dbReference>
<dbReference type="STRING" id="1148.gene:10498051"/>
<dbReference type="PaxDb" id="1148-1652265"/>
<dbReference type="EnsemblBacteria" id="BAA17188">
    <property type="protein sequence ID" value="BAA17188"/>
    <property type="gene ID" value="BAA17188"/>
</dbReference>
<dbReference type="KEGG" id="syn:sll1299"/>
<dbReference type="eggNOG" id="COG0282">
    <property type="taxonomic scope" value="Bacteria"/>
</dbReference>
<dbReference type="InParanoid" id="P73162"/>
<dbReference type="PhylomeDB" id="P73162"/>
<dbReference type="UniPathway" id="UPA00340">
    <property type="reaction ID" value="UER00458"/>
</dbReference>
<dbReference type="Proteomes" id="UP000001425">
    <property type="component" value="Chromosome"/>
</dbReference>
<dbReference type="GO" id="GO:0005737">
    <property type="term" value="C:cytoplasm"/>
    <property type="evidence" value="ECO:0007669"/>
    <property type="project" value="UniProtKB-SubCell"/>
</dbReference>
<dbReference type="GO" id="GO:0008776">
    <property type="term" value="F:acetate kinase activity"/>
    <property type="evidence" value="ECO:0000318"/>
    <property type="project" value="GO_Central"/>
</dbReference>
<dbReference type="GO" id="GO:0005524">
    <property type="term" value="F:ATP binding"/>
    <property type="evidence" value="ECO:0007669"/>
    <property type="project" value="UniProtKB-KW"/>
</dbReference>
<dbReference type="GO" id="GO:0000287">
    <property type="term" value="F:magnesium ion binding"/>
    <property type="evidence" value="ECO:0007669"/>
    <property type="project" value="UniProtKB-UniRule"/>
</dbReference>
<dbReference type="GO" id="GO:0006083">
    <property type="term" value="P:acetate metabolic process"/>
    <property type="evidence" value="ECO:0000318"/>
    <property type="project" value="GO_Central"/>
</dbReference>
<dbReference type="GO" id="GO:0006085">
    <property type="term" value="P:acetyl-CoA biosynthetic process"/>
    <property type="evidence" value="ECO:0007669"/>
    <property type="project" value="UniProtKB-UniRule"/>
</dbReference>
<dbReference type="CDD" id="cd24010">
    <property type="entry name" value="ASKHA_NBD_AcK_PK"/>
    <property type="match status" value="1"/>
</dbReference>
<dbReference type="Gene3D" id="3.30.420.40">
    <property type="match status" value="2"/>
</dbReference>
<dbReference type="HAMAP" id="MF_00020">
    <property type="entry name" value="Acetate_kinase"/>
    <property type="match status" value="1"/>
</dbReference>
<dbReference type="InterPro" id="IPR004372">
    <property type="entry name" value="Ac/propionate_kinase"/>
</dbReference>
<dbReference type="InterPro" id="IPR000890">
    <property type="entry name" value="Aliphatic_acid_kin_short-chain"/>
</dbReference>
<dbReference type="InterPro" id="IPR023865">
    <property type="entry name" value="Aliphatic_acid_kinase_CS"/>
</dbReference>
<dbReference type="InterPro" id="IPR043129">
    <property type="entry name" value="ATPase_NBD"/>
</dbReference>
<dbReference type="NCBIfam" id="TIGR00016">
    <property type="entry name" value="ackA"/>
    <property type="match status" value="1"/>
</dbReference>
<dbReference type="PANTHER" id="PTHR21060">
    <property type="entry name" value="ACETATE KINASE"/>
    <property type="match status" value="1"/>
</dbReference>
<dbReference type="PANTHER" id="PTHR21060:SF15">
    <property type="entry name" value="ACETATE KINASE-RELATED"/>
    <property type="match status" value="1"/>
</dbReference>
<dbReference type="Pfam" id="PF00871">
    <property type="entry name" value="Acetate_kinase"/>
    <property type="match status" value="1"/>
</dbReference>
<dbReference type="PIRSF" id="PIRSF000722">
    <property type="entry name" value="Acetate_prop_kin"/>
    <property type="match status" value="1"/>
</dbReference>
<dbReference type="PRINTS" id="PR00471">
    <property type="entry name" value="ACETATEKNASE"/>
</dbReference>
<dbReference type="SUPFAM" id="SSF53067">
    <property type="entry name" value="Actin-like ATPase domain"/>
    <property type="match status" value="2"/>
</dbReference>
<dbReference type="PROSITE" id="PS01075">
    <property type="entry name" value="ACETATE_KINASE_1"/>
    <property type="match status" value="1"/>
</dbReference>
<dbReference type="PROSITE" id="PS01076">
    <property type="entry name" value="ACETATE_KINASE_2"/>
    <property type="match status" value="1"/>
</dbReference>
<gene>
    <name evidence="1" type="primary">ackA</name>
    <name type="ordered locus">sll1299</name>
</gene>
<accession>P73162</accession>
<keyword id="KW-0067">ATP-binding</keyword>
<keyword id="KW-0963">Cytoplasm</keyword>
<keyword id="KW-0418">Kinase</keyword>
<keyword id="KW-0460">Magnesium</keyword>
<keyword id="KW-0479">Metal-binding</keyword>
<keyword id="KW-0547">Nucleotide-binding</keyword>
<keyword id="KW-1185">Reference proteome</keyword>
<keyword id="KW-0808">Transferase</keyword>
<comment type="function">
    <text evidence="1">Catalyzes the formation of acetyl phosphate from acetate and ATP. Can also catalyze the reverse reaction.</text>
</comment>
<comment type="catalytic activity">
    <reaction evidence="1">
        <text>acetate + ATP = acetyl phosphate + ADP</text>
        <dbReference type="Rhea" id="RHEA:11352"/>
        <dbReference type="ChEBI" id="CHEBI:22191"/>
        <dbReference type="ChEBI" id="CHEBI:30089"/>
        <dbReference type="ChEBI" id="CHEBI:30616"/>
        <dbReference type="ChEBI" id="CHEBI:456216"/>
        <dbReference type="EC" id="2.7.2.1"/>
    </reaction>
</comment>
<comment type="cofactor">
    <cofactor evidence="1">
        <name>Mg(2+)</name>
        <dbReference type="ChEBI" id="CHEBI:18420"/>
    </cofactor>
    <cofactor evidence="1">
        <name>Mn(2+)</name>
        <dbReference type="ChEBI" id="CHEBI:29035"/>
    </cofactor>
    <text evidence="1">Mg(2+). Can also accept Mn(2+).</text>
</comment>
<comment type="pathway">
    <text evidence="1">Metabolic intermediate biosynthesis; acetyl-CoA biosynthesis; acetyl-CoA from acetate: step 1/2.</text>
</comment>
<comment type="subunit">
    <text evidence="1">Homodimer.</text>
</comment>
<comment type="subcellular location">
    <subcellularLocation>
        <location evidence="1">Cytoplasm</location>
    </subcellularLocation>
</comment>
<comment type="similarity">
    <text evidence="1">Belongs to the acetokinase family.</text>
</comment>
<reference key="1">
    <citation type="journal article" date="1996" name="DNA Res.">
        <title>Sequence analysis of the genome of the unicellular cyanobacterium Synechocystis sp. strain PCC6803. II. Sequence determination of the entire genome and assignment of potential protein-coding regions.</title>
        <authorList>
            <person name="Kaneko T."/>
            <person name="Sato S."/>
            <person name="Kotani H."/>
            <person name="Tanaka A."/>
            <person name="Asamizu E."/>
            <person name="Nakamura Y."/>
            <person name="Miyajima N."/>
            <person name="Hirosawa M."/>
            <person name="Sugiura M."/>
            <person name="Sasamoto S."/>
            <person name="Kimura T."/>
            <person name="Hosouchi T."/>
            <person name="Matsuno A."/>
            <person name="Muraki A."/>
            <person name="Nakazaki N."/>
            <person name="Naruo K."/>
            <person name="Okumura S."/>
            <person name="Shimpo S."/>
            <person name="Takeuchi C."/>
            <person name="Wada T."/>
            <person name="Watanabe A."/>
            <person name="Yamada M."/>
            <person name="Yasuda M."/>
            <person name="Tabata S."/>
        </authorList>
    </citation>
    <scope>NUCLEOTIDE SEQUENCE [LARGE SCALE GENOMIC DNA]</scope>
    <source>
        <strain>ATCC 27184 / PCC 6803 / Kazusa</strain>
    </source>
</reference>
<proteinExistence type="inferred from homology"/>
<name>ACKA_SYNY3</name>
<sequence length="413" mass="44761">MKFLILNAGSSSQKSCLYELTGDRLPETIPEPLWEAFIDWTVLANQGRLTVETAGQKQVIILETGDRQQGIARMLDTLVTGDDAVLKSLAEIDLVGHRVVHGGTDHAEATLITPEVQQAIADLIPLAPAHNPAHLEGIEAISALLVLGEVPQIAVFDTAFHRTIPTPAAEYPIPQAWTNLGIRRYGFHGTSHKYCAQKTAEILGKPLADLKLITCHIGNGASLTAIKNGVSIDTTMGFTPLEGLMMGARSGSIDPAILLFLQETQGLTPAEINTTLNKKSGLLGVSGLSADLRTILQAKAEGNEQAQLAYVMYIHRFRSCLGQMIASLEGLDTLVFTAGVGENAATVRADVCQAFEFLGLKLDPELNNRSPRDTVISHSDSLVTVLIVHTEEDWAIAQDCWHWWHSQGQRKQS</sequence>
<protein>
    <recommendedName>
        <fullName evidence="1">Acetate kinase</fullName>
        <ecNumber evidence="1">2.7.2.1</ecNumber>
    </recommendedName>
    <alternativeName>
        <fullName evidence="1">Acetokinase</fullName>
    </alternativeName>
</protein>
<organism>
    <name type="scientific">Synechocystis sp. (strain ATCC 27184 / PCC 6803 / Kazusa)</name>
    <dbReference type="NCBI Taxonomy" id="1111708"/>
    <lineage>
        <taxon>Bacteria</taxon>
        <taxon>Bacillati</taxon>
        <taxon>Cyanobacteriota</taxon>
        <taxon>Cyanophyceae</taxon>
        <taxon>Synechococcales</taxon>
        <taxon>Merismopediaceae</taxon>
        <taxon>Synechocystis</taxon>
    </lineage>
</organism>
<feature type="chain" id="PRO_0000107630" description="Acetate kinase">
    <location>
        <begin position="1"/>
        <end position="413"/>
    </location>
</feature>
<feature type="active site" description="Proton donor/acceptor" evidence="1">
    <location>
        <position position="157"/>
    </location>
</feature>
<feature type="binding site" evidence="1">
    <location>
        <position position="7"/>
    </location>
    <ligand>
        <name>Mg(2+)</name>
        <dbReference type="ChEBI" id="CHEBI:18420"/>
    </ligand>
</feature>
<feature type="binding site" evidence="1">
    <location>
        <position position="14"/>
    </location>
    <ligand>
        <name>ATP</name>
        <dbReference type="ChEBI" id="CHEBI:30616"/>
    </ligand>
</feature>
<feature type="binding site" evidence="1">
    <location>
        <position position="98"/>
    </location>
    <ligand>
        <name>substrate</name>
    </ligand>
</feature>
<feature type="binding site" evidence="1">
    <location>
        <begin position="216"/>
        <end position="220"/>
    </location>
    <ligand>
        <name>ATP</name>
        <dbReference type="ChEBI" id="CHEBI:30616"/>
    </ligand>
</feature>
<feature type="binding site" evidence="1">
    <location>
        <begin position="291"/>
        <end position="293"/>
    </location>
    <ligand>
        <name>ATP</name>
        <dbReference type="ChEBI" id="CHEBI:30616"/>
    </ligand>
</feature>
<feature type="binding site" evidence="1">
    <location>
        <begin position="339"/>
        <end position="343"/>
    </location>
    <ligand>
        <name>ATP</name>
        <dbReference type="ChEBI" id="CHEBI:30616"/>
    </ligand>
</feature>
<feature type="binding site" evidence="1">
    <location>
        <position position="392"/>
    </location>
    <ligand>
        <name>Mg(2+)</name>
        <dbReference type="ChEBI" id="CHEBI:18420"/>
    </ligand>
</feature>
<feature type="site" description="Transition state stabilizer" evidence="1">
    <location>
        <position position="188"/>
    </location>
</feature>
<feature type="site" description="Transition state stabilizer" evidence="1">
    <location>
        <position position="249"/>
    </location>
</feature>
<evidence type="ECO:0000255" key="1">
    <source>
        <dbReference type="HAMAP-Rule" id="MF_00020"/>
    </source>
</evidence>